<dbReference type="EMBL" id="BX950229">
    <property type="protein sequence ID" value="CAF29857.1"/>
    <property type="molecule type" value="Genomic_DNA"/>
</dbReference>
<dbReference type="RefSeq" id="WP_011170245.1">
    <property type="nucleotide sequence ID" value="NC_005791.1"/>
</dbReference>
<dbReference type="SMR" id="Q6M0H0"/>
<dbReference type="STRING" id="267377.MMP0301"/>
<dbReference type="EnsemblBacteria" id="CAF29857">
    <property type="protein sequence ID" value="CAF29857"/>
    <property type="gene ID" value="MMP0301"/>
</dbReference>
<dbReference type="GeneID" id="2762302"/>
<dbReference type="GeneID" id="36101847"/>
<dbReference type="KEGG" id="mmp:MMP0301"/>
<dbReference type="PATRIC" id="fig|267377.15.peg.304"/>
<dbReference type="eggNOG" id="arCOG04426">
    <property type="taxonomic scope" value="Archaea"/>
</dbReference>
<dbReference type="HOGENOM" id="CLU_126929_2_1_2"/>
<dbReference type="OrthoDB" id="36835at2157"/>
<dbReference type="Proteomes" id="UP000000590">
    <property type="component" value="Chromosome"/>
</dbReference>
<dbReference type="GO" id="GO:0016151">
    <property type="term" value="F:nickel cation binding"/>
    <property type="evidence" value="ECO:0007669"/>
    <property type="project" value="UniProtKB-UniRule"/>
</dbReference>
<dbReference type="GO" id="GO:0008270">
    <property type="term" value="F:zinc ion binding"/>
    <property type="evidence" value="ECO:0007669"/>
    <property type="project" value="UniProtKB-UniRule"/>
</dbReference>
<dbReference type="GO" id="GO:0051604">
    <property type="term" value="P:protein maturation"/>
    <property type="evidence" value="ECO:0007669"/>
    <property type="project" value="InterPro"/>
</dbReference>
<dbReference type="GO" id="GO:0036211">
    <property type="term" value="P:protein modification process"/>
    <property type="evidence" value="ECO:0007669"/>
    <property type="project" value="UniProtKB-UniRule"/>
</dbReference>
<dbReference type="Gene3D" id="3.30.2320.80">
    <property type="match status" value="1"/>
</dbReference>
<dbReference type="HAMAP" id="MF_00213">
    <property type="entry name" value="HypA_HybF"/>
    <property type="match status" value="1"/>
</dbReference>
<dbReference type="InterPro" id="IPR000688">
    <property type="entry name" value="HypA/HybF"/>
</dbReference>
<dbReference type="NCBIfam" id="TIGR00100">
    <property type="entry name" value="hypA"/>
    <property type="match status" value="1"/>
</dbReference>
<dbReference type="PANTHER" id="PTHR34535">
    <property type="entry name" value="HYDROGENASE MATURATION FACTOR HYPA"/>
    <property type="match status" value="1"/>
</dbReference>
<dbReference type="PANTHER" id="PTHR34535:SF3">
    <property type="entry name" value="HYDROGENASE MATURATION FACTOR HYPA"/>
    <property type="match status" value="1"/>
</dbReference>
<dbReference type="Pfam" id="PF01155">
    <property type="entry name" value="HypA"/>
    <property type="match status" value="1"/>
</dbReference>
<dbReference type="PIRSF" id="PIRSF004761">
    <property type="entry name" value="Hydrgn_mat_HypA"/>
    <property type="match status" value="1"/>
</dbReference>
<feature type="chain" id="PRO_0000129080" description="Hydrogenase maturation factor HypA">
    <location>
        <begin position="1"/>
        <end position="126"/>
    </location>
</feature>
<feature type="binding site" evidence="1">
    <location>
        <position position="2"/>
    </location>
    <ligand>
        <name>Ni(2+)</name>
        <dbReference type="ChEBI" id="CHEBI:49786"/>
    </ligand>
</feature>
<feature type="binding site" evidence="1">
    <location>
        <position position="78"/>
    </location>
    <ligand>
        <name>Zn(2+)</name>
        <dbReference type="ChEBI" id="CHEBI:29105"/>
    </ligand>
</feature>
<feature type="binding site" evidence="1">
    <location>
        <position position="81"/>
    </location>
    <ligand>
        <name>Zn(2+)</name>
        <dbReference type="ChEBI" id="CHEBI:29105"/>
    </ligand>
</feature>
<feature type="binding site" evidence="1">
    <location>
        <position position="97"/>
    </location>
    <ligand>
        <name>Zn(2+)</name>
        <dbReference type="ChEBI" id="CHEBI:29105"/>
    </ligand>
</feature>
<feature type="binding site" evidence="1">
    <location>
        <position position="100"/>
    </location>
    <ligand>
        <name>Zn(2+)</name>
        <dbReference type="ChEBI" id="CHEBI:29105"/>
    </ligand>
</feature>
<organism>
    <name type="scientific">Methanococcus maripaludis (strain DSM 14266 / JCM 13030 / NBRC 101832 / S2 / LL)</name>
    <dbReference type="NCBI Taxonomy" id="267377"/>
    <lineage>
        <taxon>Archaea</taxon>
        <taxon>Methanobacteriati</taxon>
        <taxon>Methanobacteriota</taxon>
        <taxon>Methanomada group</taxon>
        <taxon>Methanococci</taxon>
        <taxon>Methanococcales</taxon>
        <taxon>Methanococcaceae</taxon>
        <taxon>Methanococcus</taxon>
    </lineage>
</organism>
<reference key="1">
    <citation type="journal article" date="2004" name="J. Bacteriol.">
        <title>Complete genome sequence of the genetically tractable hydrogenotrophic methanogen Methanococcus maripaludis.</title>
        <authorList>
            <person name="Hendrickson E.L."/>
            <person name="Kaul R."/>
            <person name="Zhou Y."/>
            <person name="Bovee D."/>
            <person name="Chapman P."/>
            <person name="Chung J."/>
            <person name="Conway de Macario E."/>
            <person name="Dodsworth J.A."/>
            <person name="Gillett W."/>
            <person name="Graham D.E."/>
            <person name="Hackett M."/>
            <person name="Haydock A.K."/>
            <person name="Kang A."/>
            <person name="Land M.L."/>
            <person name="Levy R."/>
            <person name="Lie T.J."/>
            <person name="Major T.A."/>
            <person name="Moore B.C."/>
            <person name="Porat I."/>
            <person name="Palmeiri A."/>
            <person name="Rouse G."/>
            <person name="Saenphimmachak C."/>
            <person name="Soell D."/>
            <person name="Van Dien S."/>
            <person name="Wang T."/>
            <person name="Whitman W.B."/>
            <person name="Xia Q."/>
            <person name="Zhang Y."/>
            <person name="Larimer F.W."/>
            <person name="Olson M.V."/>
            <person name="Leigh J.A."/>
        </authorList>
    </citation>
    <scope>NUCLEOTIDE SEQUENCE [LARGE SCALE GENOMIC DNA]</scope>
    <source>
        <strain>DSM 14266 / JCM 13030 / NBRC 101832 / S2 / LL</strain>
    </source>
</reference>
<gene>
    <name evidence="1" type="primary">hypA</name>
    <name type="ordered locus">MMP0301</name>
</gene>
<sequence>MHELSYATSVLNAILDAVKQQEELGRKVIKVNDINLEIGDLTLISLDQLQFVFEVISEDTICKGAELKAEMVKPKIFCNDCEFEGNLDTKDELEVVCPKCESRNIKLKGGKEFNIVNATIEFDDEE</sequence>
<protein>
    <recommendedName>
        <fullName evidence="1">Hydrogenase maturation factor HypA</fullName>
    </recommendedName>
</protein>
<comment type="function">
    <text evidence="1">Involved in the maturation of [NiFe] hydrogenases. Required for nickel insertion into the metal center of the hydrogenase.</text>
</comment>
<comment type="similarity">
    <text evidence="1">Belongs to the HypA/HybF family.</text>
</comment>
<evidence type="ECO:0000255" key="1">
    <source>
        <dbReference type="HAMAP-Rule" id="MF_00213"/>
    </source>
</evidence>
<name>HYPA_METMP</name>
<proteinExistence type="inferred from homology"/>
<keyword id="KW-0479">Metal-binding</keyword>
<keyword id="KW-0533">Nickel</keyword>
<keyword id="KW-1185">Reference proteome</keyword>
<keyword id="KW-0862">Zinc</keyword>
<accession>Q6M0H0</accession>